<reference key="1">
    <citation type="journal article" date="2000" name="Nature">
        <title>The genome sequence of the plant pathogen Xylella fastidiosa.</title>
        <authorList>
            <person name="Simpson A.J.G."/>
            <person name="Reinach F.C."/>
            <person name="Arruda P."/>
            <person name="Abreu F.A."/>
            <person name="Acencio M."/>
            <person name="Alvarenga R."/>
            <person name="Alves L.M.C."/>
            <person name="Araya J.E."/>
            <person name="Baia G.S."/>
            <person name="Baptista C.S."/>
            <person name="Barros M.H."/>
            <person name="Bonaccorsi E.D."/>
            <person name="Bordin S."/>
            <person name="Bove J.M."/>
            <person name="Briones M.R.S."/>
            <person name="Bueno M.R.P."/>
            <person name="Camargo A.A."/>
            <person name="Camargo L.E.A."/>
            <person name="Carraro D.M."/>
            <person name="Carrer H."/>
            <person name="Colauto N.B."/>
            <person name="Colombo C."/>
            <person name="Costa F.F."/>
            <person name="Costa M.C.R."/>
            <person name="Costa-Neto C.M."/>
            <person name="Coutinho L.L."/>
            <person name="Cristofani M."/>
            <person name="Dias-Neto E."/>
            <person name="Docena C."/>
            <person name="El-Dorry H."/>
            <person name="Facincani A.P."/>
            <person name="Ferreira A.J.S."/>
            <person name="Ferreira V.C.A."/>
            <person name="Ferro J.A."/>
            <person name="Fraga J.S."/>
            <person name="Franca S.C."/>
            <person name="Franco M.C."/>
            <person name="Frohme M."/>
            <person name="Furlan L.R."/>
            <person name="Garnier M."/>
            <person name="Goldman G.H."/>
            <person name="Goldman M.H.S."/>
            <person name="Gomes S.L."/>
            <person name="Gruber A."/>
            <person name="Ho P.L."/>
            <person name="Hoheisel J.D."/>
            <person name="Junqueira M.L."/>
            <person name="Kemper E.L."/>
            <person name="Kitajima J.P."/>
            <person name="Krieger J.E."/>
            <person name="Kuramae E.E."/>
            <person name="Laigret F."/>
            <person name="Lambais M.R."/>
            <person name="Leite L.C.C."/>
            <person name="Lemos E.G.M."/>
            <person name="Lemos M.V.F."/>
            <person name="Lopes S.A."/>
            <person name="Lopes C.R."/>
            <person name="Machado J.A."/>
            <person name="Machado M.A."/>
            <person name="Madeira A.M.B.N."/>
            <person name="Madeira H.M.F."/>
            <person name="Marino C.L."/>
            <person name="Marques M.V."/>
            <person name="Martins E.A.L."/>
            <person name="Martins E.M.F."/>
            <person name="Matsukuma A.Y."/>
            <person name="Menck C.F.M."/>
            <person name="Miracca E.C."/>
            <person name="Miyaki C.Y."/>
            <person name="Monteiro-Vitorello C.B."/>
            <person name="Moon D.H."/>
            <person name="Nagai M.A."/>
            <person name="Nascimento A.L.T.O."/>
            <person name="Netto L.E.S."/>
            <person name="Nhani A. Jr."/>
            <person name="Nobrega F.G."/>
            <person name="Nunes L.R."/>
            <person name="Oliveira M.A."/>
            <person name="de Oliveira M.C."/>
            <person name="de Oliveira R.C."/>
            <person name="Palmieri D.A."/>
            <person name="Paris A."/>
            <person name="Peixoto B.R."/>
            <person name="Pereira G.A.G."/>
            <person name="Pereira H.A. Jr."/>
            <person name="Pesquero J.B."/>
            <person name="Quaggio R.B."/>
            <person name="Roberto P.G."/>
            <person name="Rodrigues V."/>
            <person name="de Rosa A.J.M."/>
            <person name="de Rosa V.E. Jr."/>
            <person name="de Sa R.G."/>
            <person name="Santelli R.V."/>
            <person name="Sawasaki H.E."/>
            <person name="da Silva A.C.R."/>
            <person name="da Silva A.M."/>
            <person name="da Silva F.R."/>
            <person name="Silva W.A. Jr."/>
            <person name="da Silveira J.F."/>
            <person name="Silvestri M.L.Z."/>
            <person name="Siqueira W.J."/>
            <person name="de Souza A.A."/>
            <person name="de Souza A.P."/>
            <person name="Terenzi M.F."/>
            <person name="Truffi D."/>
            <person name="Tsai S.M."/>
            <person name="Tsuhako M.H."/>
            <person name="Vallada H."/>
            <person name="Van Sluys M.A."/>
            <person name="Verjovski-Almeida S."/>
            <person name="Vettore A.L."/>
            <person name="Zago M.A."/>
            <person name="Zatz M."/>
            <person name="Meidanis J."/>
            <person name="Setubal J.C."/>
        </authorList>
    </citation>
    <scope>NUCLEOTIDE SEQUENCE [LARGE SCALE GENOMIC DNA]</scope>
    <source>
        <strain>9a5c</strain>
    </source>
</reference>
<keyword id="KW-0963">Cytoplasm</keyword>
<keyword id="KW-0275">Fatty acid biosynthesis</keyword>
<keyword id="KW-0276">Fatty acid metabolism</keyword>
<keyword id="KW-0413">Isomerase</keyword>
<keyword id="KW-0444">Lipid biosynthesis</keyword>
<keyword id="KW-0443">Lipid metabolism</keyword>
<keyword id="KW-0456">Lyase</keyword>
<dbReference type="EC" id="4.2.1.59"/>
<dbReference type="EC" id="5.3.3.14"/>
<dbReference type="EMBL" id="AE003849">
    <property type="protein sequence ID" value="AAF83382.1"/>
    <property type="status" value="ALT_INIT"/>
    <property type="molecule type" value="Genomic_DNA"/>
</dbReference>
<dbReference type="PIR" id="F82787">
    <property type="entry name" value="F82787"/>
</dbReference>
<dbReference type="RefSeq" id="WP_042462808.1">
    <property type="nucleotide sequence ID" value="NC_002488.3"/>
</dbReference>
<dbReference type="SMR" id="Q9PFT5"/>
<dbReference type="STRING" id="160492.XF_0572"/>
<dbReference type="KEGG" id="xfa:XF_0572"/>
<dbReference type="eggNOG" id="COG0764">
    <property type="taxonomic scope" value="Bacteria"/>
</dbReference>
<dbReference type="HOGENOM" id="CLU_097925_0_0_6"/>
<dbReference type="UniPathway" id="UPA00094"/>
<dbReference type="Proteomes" id="UP000000812">
    <property type="component" value="Chromosome"/>
</dbReference>
<dbReference type="GO" id="GO:0005737">
    <property type="term" value="C:cytoplasm"/>
    <property type="evidence" value="ECO:0007669"/>
    <property type="project" value="UniProtKB-SubCell"/>
</dbReference>
<dbReference type="GO" id="GO:0019171">
    <property type="term" value="F:(3R)-hydroxyacyl-[acyl-carrier-protein] dehydratase activity"/>
    <property type="evidence" value="ECO:0007669"/>
    <property type="project" value="UniProtKB-UniRule"/>
</dbReference>
<dbReference type="GO" id="GO:0034017">
    <property type="term" value="F:trans-2-decenoyl-acyl-carrier-protein isomerase activity"/>
    <property type="evidence" value="ECO:0007669"/>
    <property type="project" value="UniProtKB-UniRule"/>
</dbReference>
<dbReference type="GO" id="GO:0006636">
    <property type="term" value="P:unsaturated fatty acid biosynthetic process"/>
    <property type="evidence" value="ECO:0007669"/>
    <property type="project" value="UniProtKB-UniRule"/>
</dbReference>
<dbReference type="Gene3D" id="3.10.129.10">
    <property type="entry name" value="Hotdog Thioesterase"/>
    <property type="match status" value="1"/>
</dbReference>
<dbReference type="HAMAP" id="MF_00405">
    <property type="entry name" value="FabA"/>
    <property type="match status" value="1"/>
</dbReference>
<dbReference type="InterPro" id="IPR010083">
    <property type="entry name" value="FabA"/>
</dbReference>
<dbReference type="InterPro" id="IPR013114">
    <property type="entry name" value="FabA_FabZ"/>
</dbReference>
<dbReference type="InterPro" id="IPR029069">
    <property type="entry name" value="HotDog_dom_sf"/>
</dbReference>
<dbReference type="NCBIfam" id="TIGR01749">
    <property type="entry name" value="fabA"/>
    <property type="match status" value="1"/>
</dbReference>
<dbReference type="NCBIfam" id="NF003509">
    <property type="entry name" value="PRK05174.1"/>
    <property type="match status" value="1"/>
</dbReference>
<dbReference type="PANTHER" id="PTHR30272">
    <property type="entry name" value="3-HYDROXYACYL-[ACYL-CARRIER-PROTEIN] DEHYDRATASE"/>
    <property type="match status" value="1"/>
</dbReference>
<dbReference type="PANTHER" id="PTHR30272:SF8">
    <property type="entry name" value="3-HYDROXYDECANOYL-[ACYL-CARRIER-PROTEIN] DEHYDRATASE"/>
    <property type="match status" value="1"/>
</dbReference>
<dbReference type="Pfam" id="PF07977">
    <property type="entry name" value="FabA"/>
    <property type="match status" value="1"/>
</dbReference>
<dbReference type="SUPFAM" id="SSF54637">
    <property type="entry name" value="Thioesterase/thiol ester dehydrase-isomerase"/>
    <property type="match status" value="1"/>
</dbReference>
<sequence length="172" mass="19272">MSRQHAYSREELLATARGELFSHSNARLPNDPMLMFDRITEIYADGGSHGKGIVNAELDIRPDLWFFGCHFLGDPVMPGCLGLDAMWQLTGFFLTWSGATPGYGRALGCGEVKFTGQVLPNAKLVRYEIEMTKIINRTLVIGQANARMLVDNREIYFAKDLRVGMFNSTESF</sequence>
<comment type="function">
    <text evidence="1">Necessary for the introduction of cis unsaturation into fatty acids. Catalyzes the dehydration of (3R)-3-hydroxydecanoyl-ACP to E-(2)-decenoyl-ACP and then its isomerization to Z-(3)-decenoyl-ACP. Can catalyze the dehydratase reaction for beta-hydroxyacyl-ACPs with saturated chain lengths up to 16:0, being most active on intermediate chain length (By similarity).</text>
</comment>
<comment type="catalytic activity">
    <reaction>
        <text>a (3R)-hydroxyacyl-[ACP] = a (2E)-enoyl-[ACP] + H2O</text>
        <dbReference type="Rhea" id="RHEA:13097"/>
        <dbReference type="Rhea" id="RHEA-COMP:9925"/>
        <dbReference type="Rhea" id="RHEA-COMP:9945"/>
        <dbReference type="ChEBI" id="CHEBI:15377"/>
        <dbReference type="ChEBI" id="CHEBI:78784"/>
        <dbReference type="ChEBI" id="CHEBI:78827"/>
        <dbReference type="EC" id="4.2.1.59"/>
    </reaction>
</comment>
<comment type="catalytic activity">
    <reaction>
        <text>(3R)-hydroxydecanoyl-[ACP] = (2E)-decenoyl-[ACP] + H2O</text>
        <dbReference type="Rhea" id="RHEA:41860"/>
        <dbReference type="Rhea" id="RHEA-COMP:9638"/>
        <dbReference type="Rhea" id="RHEA-COMP:9639"/>
        <dbReference type="ChEBI" id="CHEBI:15377"/>
        <dbReference type="ChEBI" id="CHEBI:78466"/>
        <dbReference type="ChEBI" id="CHEBI:78467"/>
    </reaction>
</comment>
<comment type="catalytic activity">
    <reaction>
        <text>(2E)-decenoyl-[ACP] = (3Z)-decenoyl-[ACP]</text>
        <dbReference type="Rhea" id="RHEA:23568"/>
        <dbReference type="Rhea" id="RHEA-COMP:9639"/>
        <dbReference type="Rhea" id="RHEA-COMP:9927"/>
        <dbReference type="ChEBI" id="CHEBI:78467"/>
        <dbReference type="ChEBI" id="CHEBI:78798"/>
        <dbReference type="EC" id="5.3.3.14"/>
    </reaction>
</comment>
<comment type="pathway">
    <text>Lipid metabolism; fatty acid biosynthesis.</text>
</comment>
<comment type="subunit">
    <text evidence="1">Homodimer.</text>
</comment>
<comment type="subcellular location">
    <subcellularLocation>
        <location evidence="1">Cytoplasm</location>
    </subcellularLocation>
</comment>
<comment type="similarity">
    <text evidence="2">Belongs to the thioester dehydratase family. FabA subfamily.</text>
</comment>
<comment type="sequence caution" evidence="2">
    <conflict type="erroneous initiation">
        <sequence resource="EMBL-CDS" id="AAF83382"/>
    </conflict>
</comment>
<organism>
    <name type="scientific">Xylella fastidiosa (strain 9a5c)</name>
    <dbReference type="NCBI Taxonomy" id="160492"/>
    <lineage>
        <taxon>Bacteria</taxon>
        <taxon>Pseudomonadati</taxon>
        <taxon>Pseudomonadota</taxon>
        <taxon>Gammaproteobacteria</taxon>
        <taxon>Lysobacterales</taxon>
        <taxon>Lysobacteraceae</taxon>
        <taxon>Xylella</taxon>
    </lineage>
</organism>
<evidence type="ECO:0000250" key="1"/>
<evidence type="ECO:0000305" key="2"/>
<name>FABA_XYLFA</name>
<proteinExistence type="inferred from homology"/>
<protein>
    <recommendedName>
        <fullName>3-hydroxydecanoyl-[acyl-carrier-protein] dehydratase</fullName>
        <ecNumber>4.2.1.59</ecNumber>
    </recommendedName>
    <alternativeName>
        <fullName>3-hydroxyacyl-[acyl-carrier-protein] dehydratase FabA</fullName>
    </alternativeName>
    <alternativeName>
        <fullName>Beta-hydroxydecanoyl thioester dehydrase</fullName>
    </alternativeName>
    <alternativeName>
        <fullName>Trans-2-decenoyl-[acyl-carrier-protein] isomerase</fullName>
        <ecNumber>5.3.3.14</ecNumber>
    </alternativeName>
</protein>
<accession>Q9PFT5</accession>
<gene>
    <name type="primary">fabA</name>
    <name type="ordered locus">XF_0572</name>
</gene>
<feature type="chain" id="PRO_0000091624" description="3-hydroxydecanoyl-[acyl-carrier-protein] dehydratase">
    <location>
        <begin position="1"/>
        <end position="172"/>
    </location>
</feature>
<feature type="active site" evidence="1">
    <location>
        <position position="70"/>
    </location>
</feature>